<organism>
    <name type="scientific">Stylosanthes hamata</name>
    <name type="common">Caribbean stylo</name>
    <dbReference type="NCBI Taxonomy" id="37660"/>
    <lineage>
        <taxon>Eukaryota</taxon>
        <taxon>Viridiplantae</taxon>
        <taxon>Streptophyta</taxon>
        <taxon>Embryophyta</taxon>
        <taxon>Tracheophyta</taxon>
        <taxon>Spermatophyta</taxon>
        <taxon>Magnoliopsida</taxon>
        <taxon>eudicotyledons</taxon>
        <taxon>Gunneridae</taxon>
        <taxon>Pentapetalae</taxon>
        <taxon>rosids</taxon>
        <taxon>fabids</taxon>
        <taxon>Fabales</taxon>
        <taxon>Fabaceae</taxon>
        <taxon>Papilionoideae</taxon>
        <taxon>50 kb inversion clade</taxon>
        <taxon>dalbergioids sensu lato</taxon>
        <taxon>Dalbergieae</taxon>
        <taxon>Pterocarpus clade</taxon>
        <taxon>Stylosanthes</taxon>
    </lineage>
</organism>
<protein>
    <recommendedName>
        <fullName>High affinity sulfate transporter 2</fullName>
    </recommendedName>
</protein>
<name>SUT2_STYHA</name>
<keyword id="KW-0472">Membrane</keyword>
<keyword id="KW-0812">Transmembrane</keyword>
<keyword id="KW-1133">Transmembrane helix</keyword>
<keyword id="KW-0813">Transport</keyword>
<reference key="1">
    <citation type="journal article" date="1995" name="Proc. Natl. Acad. Sci. U.S.A.">
        <title>Plant members of a family of sulfate transporters reveal functional subtypes.</title>
        <authorList>
            <person name="Smith F.W."/>
            <person name="Ealing P.M."/>
            <person name="Hawkesford M.J."/>
            <person name="Clarkson D.T."/>
        </authorList>
    </citation>
    <scope>NUCLEOTIDE SEQUENCE [MRNA]</scope>
    <source>
        <strain>cv. Verano</strain>
        <tissue>Root</tissue>
    </source>
</reference>
<sequence>MSQRVSDQAMAEVIAETRTNSSSRRHGGGDDTPSLPYMHKVGAPPKQTLFQEIKHSFNETFFPDKPFGNFKDQSGSRKFVLGLQYIFPILEWGRHYDLKKFRGDFIAGLTIASLCIPQDLAYAKLANLDPWYGLYSSFVAPLVYAFMGTSRDIAIGPVAVVSLLLGTLLSNEISNTKSHDYLRLAFTATFFAGVTQMLLGVCRLGFLIDFLSHAAIVGFMAGAAITIGLQQLKGLLGIKDFTKNSDIVSVMHSVWSNVHHGWNWETILIGLSFLIFLLITKYIAKKNKKLFWVSAISPMICVIVSTFFVYITRADKRGVTIVKHIKSGVNPSSANEIFFHGKYLGAGVRVGVVAGLVALTEAMAIGRTFAAMKDYSIDGNKEMVAMGTMNIVGSLTSCYVTTGSFSRSAVNYMAGCKTAVSNIVMAIVVLLTLLVITPLFKYTPNAVLASIIIAAVVNLVNIEAMVLLWKIDKFDFVACMGAFFGVIFKSVEIGLLIAVAISFAKILLQVTRPRTAVLGKLPGTSVYRNIQQYPKAEQIPGMLIIRVDSAIYFSNSNYIKERILRWLIDEGAQRTESELPEIQHLIVEMSPVTDIDTSGIHAFEELYKTLQKREVQLMLANPGPVVIEKLHASNLAELIGEDKIFLTVADAVATYGPKTAAF</sequence>
<feature type="chain" id="PRO_0000080190" description="High affinity sulfate transporter 2">
    <location>
        <begin position="1"/>
        <end position="662"/>
    </location>
</feature>
<feature type="transmembrane region" description="Helical" evidence="1">
    <location>
        <begin position="103"/>
        <end position="123"/>
    </location>
</feature>
<feature type="transmembrane region" description="Helical" evidence="1">
    <location>
        <begin position="128"/>
        <end position="148"/>
    </location>
</feature>
<feature type="transmembrane region" description="Helical" evidence="1">
    <location>
        <begin position="153"/>
        <end position="173"/>
    </location>
</feature>
<feature type="transmembrane region" description="Helical" evidence="1">
    <location>
        <begin position="182"/>
        <end position="202"/>
    </location>
</feature>
<feature type="transmembrane region" description="Helical" evidence="1">
    <location>
        <begin position="205"/>
        <end position="225"/>
    </location>
</feature>
<feature type="transmembrane region" description="Helical" evidence="1">
    <location>
        <begin position="264"/>
        <end position="284"/>
    </location>
</feature>
<feature type="transmembrane region" description="Helical" evidence="1">
    <location>
        <begin position="291"/>
        <end position="311"/>
    </location>
</feature>
<feature type="transmembrane region" description="Helical" evidence="1">
    <location>
        <begin position="346"/>
        <end position="366"/>
    </location>
</feature>
<feature type="transmembrane region" description="Helical" evidence="1">
    <location>
        <begin position="383"/>
        <end position="403"/>
    </location>
</feature>
<feature type="transmembrane region" description="Helical" evidence="1">
    <location>
        <begin position="420"/>
        <end position="440"/>
    </location>
</feature>
<feature type="transmembrane region" description="Helical" evidence="1">
    <location>
        <begin position="447"/>
        <end position="467"/>
    </location>
</feature>
<feature type="transmembrane region" description="Helical" evidence="1">
    <location>
        <begin position="481"/>
        <end position="501"/>
    </location>
</feature>
<feature type="domain" description="STAS" evidence="2">
    <location>
        <begin position="532"/>
        <end position="655"/>
    </location>
</feature>
<feature type="region of interest" description="Disordered" evidence="3">
    <location>
        <begin position="1"/>
        <end position="35"/>
    </location>
</feature>
<comment type="function">
    <text>High-affinity H(+)/sulfate cotransporter that mediates the uptake of sulfate by plant roots from low concentrations of sulfate in the soil solution.</text>
</comment>
<comment type="subcellular location">
    <subcellularLocation>
        <location evidence="4">Membrane</location>
        <topology evidence="4">Multi-pass membrane protein</topology>
    </subcellularLocation>
</comment>
<comment type="similarity">
    <text evidence="4">Belongs to the SLC26A/SulP transporter (TC 2.A.53) family.</text>
</comment>
<gene>
    <name type="primary">ST2</name>
</gene>
<evidence type="ECO:0000255" key="1"/>
<evidence type="ECO:0000255" key="2">
    <source>
        <dbReference type="PROSITE-ProRule" id="PRU00198"/>
    </source>
</evidence>
<evidence type="ECO:0000256" key="3">
    <source>
        <dbReference type="SAM" id="MobiDB-lite"/>
    </source>
</evidence>
<evidence type="ECO:0000305" key="4"/>
<proteinExistence type="evidence at transcript level"/>
<accession>P53392</accession>
<dbReference type="EMBL" id="X82256">
    <property type="protein sequence ID" value="CAA57711.1"/>
    <property type="molecule type" value="mRNA"/>
</dbReference>
<dbReference type="PIR" id="S51764">
    <property type="entry name" value="S51764"/>
</dbReference>
<dbReference type="SMR" id="P53392"/>
<dbReference type="GO" id="GO:0016020">
    <property type="term" value="C:membrane"/>
    <property type="evidence" value="ECO:0007669"/>
    <property type="project" value="UniProtKB-SubCell"/>
</dbReference>
<dbReference type="GO" id="GO:0008271">
    <property type="term" value="F:secondary active sulfate transmembrane transporter activity"/>
    <property type="evidence" value="ECO:0007669"/>
    <property type="project" value="InterPro"/>
</dbReference>
<dbReference type="CDD" id="cd07042">
    <property type="entry name" value="STAS_SulP_like_sulfate_transporter"/>
    <property type="match status" value="1"/>
</dbReference>
<dbReference type="FunFam" id="3.30.750.24:FF:000002">
    <property type="entry name" value="Sulfate transporter 31"/>
    <property type="match status" value="1"/>
</dbReference>
<dbReference type="Gene3D" id="3.30.750.24">
    <property type="entry name" value="STAS domain"/>
    <property type="match status" value="1"/>
</dbReference>
<dbReference type="InterPro" id="IPR018045">
    <property type="entry name" value="S04_transporter_CS"/>
</dbReference>
<dbReference type="InterPro" id="IPR011547">
    <property type="entry name" value="SLC26A/SulP_dom"/>
</dbReference>
<dbReference type="InterPro" id="IPR001902">
    <property type="entry name" value="SLC26A/SulP_fam"/>
</dbReference>
<dbReference type="InterPro" id="IPR002645">
    <property type="entry name" value="STAS_dom"/>
</dbReference>
<dbReference type="InterPro" id="IPR036513">
    <property type="entry name" value="STAS_dom_sf"/>
</dbReference>
<dbReference type="NCBIfam" id="TIGR00815">
    <property type="entry name" value="sulP"/>
    <property type="match status" value="1"/>
</dbReference>
<dbReference type="PANTHER" id="PTHR11814">
    <property type="entry name" value="SULFATE TRANSPORTER"/>
    <property type="match status" value="1"/>
</dbReference>
<dbReference type="Pfam" id="PF01740">
    <property type="entry name" value="STAS"/>
    <property type="match status" value="1"/>
</dbReference>
<dbReference type="Pfam" id="PF00916">
    <property type="entry name" value="Sulfate_transp"/>
    <property type="match status" value="1"/>
</dbReference>
<dbReference type="SUPFAM" id="SSF52091">
    <property type="entry name" value="SpoIIaa-like"/>
    <property type="match status" value="1"/>
</dbReference>
<dbReference type="PROSITE" id="PS01130">
    <property type="entry name" value="SLC26A"/>
    <property type="match status" value="1"/>
</dbReference>
<dbReference type="PROSITE" id="PS50801">
    <property type="entry name" value="STAS"/>
    <property type="match status" value="1"/>
</dbReference>